<name>COBQ_RUMCH</name>
<comment type="function">
    <text evidence="1">Catalyzes amidations at positions B, D, E, and G on adenosylcobyrinic A,C-diamide. NH(2) groups are provided by glutamine, and one molecule of ATP is hydrogenolyzed for each amidation.</text>
</comment>
<comment type="pathway">
    <text evidence="1">Cofactor biosynthesis; adenosylcobalamin biosynthesis.</text>
</comment>
<comment type="similarity">
    <text evidence="1">Belongs to the CobB/CobQ family. CobQ subfamily.</text>
</comment>
<reference key="1">
    <citation type="submission" date="2009-01" db="EMBL/GenBank/DDBJ databases">
        <title>Complete sequence of Clostridium cellulolyticum H10.</title>
        <authorList>
            <consortium name="US DOE Joint Genome Institute"/>
            <person name="Lucas S."/>
            <person name="Copeland A."/>
            <person name="Lapidus A."/>
            <person name="Glavina del Rio T."/>
            <person name="Dalin E."/>
            <person name="Tice H."/>
            <person name="Bruce D."/>
            <person name="Goodwin L."/>
            <person name="Pitluck S."/>
            <person name="Chertkov O."/>
            <person name="Saunders E."/>
            <person name="Brettin T."/>
            <person name="Detter J.C."/>
            <person name="Han C."/>
            <person name="Larimer F."/>
            <person name="Land M."/>
            <person name="Hauser L."/>
            <person name="Kyrpides N."/>
            <person name="Ivanova N."/>
            <person name="Zhou J."/>
            <person name="Richardson P."/>
        </authorList>
    </citation>
    <scope>NUCLEOTIDE SEQUENCE [LARGE SCALE GENOMIC DNA]</scope>
    <source>
        <strain>ATCC 35319 / DSM 5812 / JCM 6584 / H10</strain>
    </source>
</reference>
<feature type="chain" id="PRO_1000116902" description="Cobyric acid synthase">
    <location>
        <begin position="1"/>
        <end position="514"/>
    </location>
</feature>
<feature type="domain" description="GATase cobBQ-type" evidence="1">
    <location>
        <begin position="249"/>
        <end position="448"/>
    </location>
</feature>
<feature type="active site" description="Nucleophile" evidence="1">
    <location>
        <position position="330"/>
    </location>
</feature>
<feature type="active site" evidence="1">
    <location>
        <position position="440"/>
    </location>
</feature>
<sequence>MAKPIMIQGTMSNAGKSLLTAGLCRIFTQDGYRVAPFKSQNMALNSYITTDGSEMGRAQVVQAEAAGKAPDVRMNPILLKPTSEKGSQVILGGKPIGNMTTTEYYAHKHNLLPHIKRAYESLSQENDIIVIEGAGSPAEINLKRDDFVNMGLAKMLKAPVLIAGDIDRGGVFASLYGTVMLFDEDERKHVKGTIINKFRGDVEILKPGLDMLCDLIHVPVVGVVPYLHVDIDDEDSLSERFSKKGPLGLIDIAVIKLPRISNFTDFNALEHIECASVRYVSGTNELGNPDLIIIPGSKNTMGDLKWMRENGLEVCIKKHAAKNKPVFGICGGYQMLCENLGDPYGVEHGGEMKGMGLLKSTTVFEKEKTRTRVMGTFSKVGGIFNGLSGKTFEGYEIHMGYTASEEGNEGDSSLSNLAEISGNEKPDGMQKGNVYGTYVHGVFDNDEILSEIAAALMKEKGLEYEKHTFFNLKEYKEKQYNLLADALRECLDMEYIYKVIEEGIENGNNETNGY</sequence>
<accession>B8I0R5</accession>
<organism>
    <name type="scientific">Ruminiclostridium cellulolyticum (strain ATCC 35319 / DSM 5812 / JCM 6584 / H10)</name>
    <name type="common">Clostridium cellulolyticum</name>
    <dbReference type="NCBI Taxonomy" id="394503"/>
    <lineage>
        <taxon>Bacteria</taxon>
        <taxon>Bacillati</taxon>
        <taxon>Bacillota</taxon>
        <taxon>Clostridia</taxon>
        <taxon>Eubacteriales</taxon>
        <taxon>Oscillospiraceae</taxon>
        <taxon>Ruminiclostridium</taxon>
    </lineage>
</organism>
<evidence type="ECO:0000255" key="1">
    <source>
        <dbReference type="HAMAP-Rule" id="MF_00028"/>
    </source>
</evidence>
<dbReference type="EMBL" id="CP001348">
    <property type="protein sequence ID" value="ACL75640.1"/>
    <property type="molecule type" value="Genomic_DNA"/>
</dbReference>
<dbReference type="RefSeq" id="WP_015924789.1">
    <property type="nucleotide sequence ID" value="NC_011898.1"/>
</dbReference>
<dbReference type="SMR" id="B8I0R5"/>
<dbReference type="STRING" id="394503.Ccel_1284"/>
<dbReference type="KEGG" id="cce:Ccel_1284"/>
<dbReference type="eggNOG" id="COG1492">
    <property type="taxonomic scope" value="Bacteria"/>
</dbReference>
<dbReference type="HOGENOM" id="CLU_019250_2_2_9"/>
<dbReference type="OrthoDB" id="9808302at2"/>
<dbReference type="UniPathway" id="UPA00148"/>
<dbReference type="Proteomes" id="UP000001349">
    <property type="component" value="Chromosome"/>
</dbReference>
<dbReference type="GO" id="GO:0015420">
    <property type="term" value="F:ABC-type vitamin B12 transporter activity"/>
    <property type="evidence" value="ECO:0007669"/>
    <property type="project" value="UniProtKB-UniRule"/>
</dbReference>
<dbReference type="GO" id="GO:0003824">
    <property type="term" value="F:catalytic activity"/>
    <property type="evidence" value="ECO:0007669"/>
    <property type="project" value="InterPro"/>
</dbReference>
<dbReference type="GO" id="GO:0009236">
    <property type="term" value="P:cobalamin biosynthetic process"/>
    <property type="evidence" value="ECO:0007669"/>
    <property type="project" value="UniProtKB-UniRule"/>
</dbReference>
<dbReference type="CDD" id="cd05389">
    <property type="entry name" value="CobQ_N"/>
    <property type="match status" value="1"/>
</dbReference>
<dbReference type="CDD" id="cd01750">
    <property type="entry name" value="GATase1_CobQ"/>
    <property type="match status" value="1"/>
</dbReference>
<dbReference type="Gene3D" id="3.40.50.880">
    <property type="match status" value="1"/>
</dbReference>
<dbReference type="Gene3D" id="3.40.50.300">
    <property type="entry name" value="P-loop containing nucleotide triphosphate hydrolases"/>
    <property type="match status" value="1"/>
</dbReference>
<dbReference type="HAMAP" id="MF_00028">
    <property type="entry name" value="CobQ"/>
    <property type="match status" value="1"/>
</dbReference>
<dbReference type="InterPro" id="IPR029062">
    <property type="entry name" value="Class_I_gatase-like"/>
</dbReference>
<dbReference type="InterPro" id="IPR002586">
    <property type="entry name" value="CobQ/CobB/MinD/ParA_Nub-bd_dom"/>
</dbReference>
<dbReference type="InterPro" id="IPR033949">
    <property type="entry name" value="CobQ_GATase1"/>
</dbReference>
<dbReference type="InterPro" id="IPR047045">
    <property type="entry name" value="CobQ_N"/>
</dbReference>
<dbReference type="InterPro" id="IPR004459">
    <property type="entry name" value="CobQ_synth"/>
</dbReference>
<dbReference type="InterPro" id="IPR011698">
    <property type="entry name" value="GATase_3"/>
</dbReference>
<dbReference type="InterPro" id="IPR027417">
    <property type="entry name" value="P-loop_NTPase"/>
</dbReference>
<dbReference type="NCBIfam" id="TIGR00313">
    <property type="entry name" value="cobQ"/>
    <property type="match status" value="1"/>
</dbReference>
<dbReference type="NCBIfam" id="NF001989">
    <property type="entry name" value="PRK00784.1"/>
    <property type="match status" value="1"/>
</dbReference>
<dbReference type="PANTHER" id="PTHR21343:SF1">
    <property type="entry name" value="COBYRIC ACID SYNTHASE"/>
    <property type="match status" value="1"/>
</dbReference>
<dbReference type="PANTHER" id="PTHR21343">
    <property type="entry name" value="DETHIOBIOTIN SYNTHETASE"/>
    <property type="match status" value="1"/>
</dbReference>
<dbReference type="Pfam" id="PF01656">
    <property type="entry name" value="CbiA"/>
    <property type="match status" value="1"/>
</dbReference>
<dbReference type="Pfam" id="PF07685">
    <property type="entry name" value="GATase_3"/>
    <property type="match status" value="1"/>
</dbReference>
<dbReference type="SUPFAM" id="SSF52317">
    <property type="entry name" value="Class I glutamine amidotransferase-like"/>
    <property type="match status" value="1"/>
</dbReference>
<dbReference type="SUPFAM" id="SSF52540">
    <property type="entry name" value="P-loop containing nucleoside triphosphate hydrolases"/>
    <property type="match status" value="1"/>
</dbReference>
<dbReference type="PROSITE" id="PS51274">
    <property type="entry name" value="GATASE_COBBQ"/>
    <property type="match status" value="1"/>
</dbReference>
<proteinExistence type="inferred from homology"/>
<protein>
    <recommendedName>
        <fullName evidence="1">Cobyric acid synthase</fullName>
    </recommendedName>
</protein>
<keyword id="KW-0169">Cobalamin biosynthesis</keyword>
<keyword id="KW-0315">Glutamine amidotransferase</keyword>
<keyword id="KW-1185">Reference proteome</keyword>
<gene>
    <name evidence="1" type="primary">cobQ</name>
    <name type="ordered locus">Ccel_1284</name>
</gene>